<name>NUCL2_ARATH</name>
<reference key="1">
    <citation type="journal article" date="2000" name="DNA Res.">
        <title>Structural analysis of Arabidopsis thaliana chromosome 3. II. Sequence features of the 4,251,695 bp regions covered by 90 P1, TAC and BAC clones.</title>
        <authorList>
            <person name="Kaneko T."/>
            <person name="Katoh T."/>
            <person name="Sato S."/>
            <person name="Nakamura Y."/>
            <person name="Asamizu E."/>
            <person name="Tabata S."/>
        </authorList>
    </citation>
    <scope>NUCLEOTIDE SEQUENCE [LARGE SCALE GENOMIC DNA]</scope>
    <source>
        <strain>cv. Columbia</strain>
    </source>
</reference>
<reference key="2">
    <citation type="journal article" date="2017" name="Plant J.">
        <title>Araport11: a complete reannotation of the Arabidopsis thaliana reference genome.</title>
        <authorList>
            <person name="Cheng C.Y."/>
            <person name="Krishnakumar V."/>
            <person name="Chan A.P."/>
            <person name="Thibaud-Nissen F."/>
            <person name="Schobel S."/>
            <person name="Town C.D."/>
        </authorList>
    </citation>
    <scope>GENOME REANNOTATION</scope>
    <source>
        <strain>cv. Columbia</strain>
    </source>
</reference>
<reference key="3">
    <citation type="journal article" date="2006" name="Plant Biotechnol. J.">
        <title>Simultaneous high-throughput recombinational cloning of open reading frames in closed and open configurations.</title>
        <authorList>
            <person name="Underwood B.A."/>
            <person name="Vanderhaeghen R."/>
            <person name="Whitford R."/>
            <person name="Town C.D."/>
            <person name="Hilson P."/>
        </authorList>
    </citation>
    <scope>NUCLEOTIDE SEQUENCE [LARGE SCALE MRNA]</scope>
    <source>
        <strain>cv. Columbia</strain>
    </source>
</reference>
<reference key="4">
    <citation type="journal article" date="2007" name="Mol. Biol. Cell">
        <title>Characterization of AtNUC-L1 reveals a central role of nucleolin in nucleolus organization and silencing of AtNUC-L2 gene in Arabidopsis.</title>
        <authorList>
            <person name="Pontvianne F."/>
            <person name="Matia I."/>
            <person name="Douet J."/>
            <person name="Tourmente S."/>
            <person name="Medina F.J."/>
            <person name="Echeverria M."/>
            <person name="Saez-Vasquez J."/>
        </authorList>
    </citation>
    <scope>SUBCELLULAR LOCATION</scope>
</reference>
<reference key="5">
    <citation type="journal article" date="2007" name="Mol. Cell. Proteomics">
        <title>Multidimensional protein identification technology (MudPIT) analysis of ubiquitinated proteins in plants.</title>
        <authorList>
            <person name="Maor R."/>
            <person name="Jones A."/>
            <person name="Nuehse T.S."/>
            <person name="Studholme D.J."/>
            <person name="Peck S.C."/>
            <person name="Shirasu K."/>
        </authorList>
    </citation>
    <scope>IDENTIFICATION BY MASS SPECTROMETRY [LARGE SCALE ANALYSIS]</scope>
    <source>
        <strain>cv. Landsberg erecta</strain>
    </source>
</reference>
<reference key="6">
    <citation type="journal article" date="2007" name="Plant J.">
        <title>Sugar-inducible expression of the nucleolin-1 gene of Arabidopsis thaliana and its role in ribosome synthesis, growth and development.</title>
        <authorList>
            <person name="Kojima H."/>
            <person name="Suzuki T."/>
            <person name="Kato T."/>
            <person name="Enomoto K."/>
            <person name="Sato S."/>
            <person name="Kato T."/>
            <person name="Tabata S."/>
            <person name="Saez-Vasquez J."/>
            <person name="Echeverria M."/>
            <person name="Nakagawa T."/>
            <person name="Ishiguro S."/>
            <person name="Nakamura K."/>
        </authorList>
    </citation>
    <scope>TISSUE SPECIFICITY</scope>
</reference>
<reference key="7">
    <citation type="journal article" date="2016" name="PLoS Genet.">
        <title>Dual role of a SAS10/C1D family protein in ribosomal RNA gene expression and processing is essential for reproduction in Arabidopsis thaliana.</title>
        <authorList>
            <person name="Chen Y.-J.C."/>
            <person name="Wang H.-J."/>
            <person name="Jauh G.-Y."/>
        </authorList>
    </citation>
    <scope>SUBCELLULAR LOCATION</scope>
    <scope>INTERACTION WITH THAL</scope>
    <source>
        <strain>cv. Columbia</strain>
    </source>
</reference>
<dbReference type="EMBL" id="AP001303">
    <property type="protein sequence ID" value="BAB02219.1"/>
    <property type="status" value="ALT_SEQ"/>
    <property type="molecule type" value="Genomic_DNA"/>
</dbReference>
<dbReference type="EMBL" id="CP002686">
    <property type="protein sequence ID" value="AEE76122.1"/>
    <property type="molecule type" value="Genomic_DNA"/>
</dbReference>
<dbReference type="EMBL" id="DQ446672">
    <property type="protein sequence ID" value="ABE65946.1"/>
    <property type="molecule type" value="mRNA"/>
</dbReference>
<dbReference type="RefSeq" id="NP_188491.1">
    <property type="nucleotide sequence ID" value="NM_112747.3"/>
</dbReference>
<dbReference type="SMR" id="Q1PEP5"/>
<dbReference type="FunCoup" id="Q1PEP5">
    <property type="interactions" value="27"/>
</dbReference>
<dbReference type="STRING" id="3702.Q1PEP5"/>
<dbReference type="GlyGen" id="Q1PEP5">
    <property type="glycosylation" value="2 sites"/>
</dbReference>
<dbReference type="iPTMnet" id="Q1PEP5"/>
<dbReference type="PaxDb" id="3702-AT3G18610.1"/>
<dbReference type="ProteomicsDB" id="249352"/>
<dbReference type="EnsemblPlants" id="AT3G18610.1">
    <property type="protein sequence ID" value="AT3G18610.1"/>
    <property type="gene ID" value="AT3G18610"/>
</dbReference>
<dbReference type="GeneID" id="821392"/>
<dbReference type="Gramene" id="AT3G18610.1">
    <property type="protein sequence ID" value="AT3G18610.1"/>
    <property type="gene ID" value="AT3G18610"/>
</dbReference>
<dbReference type="KEGG" id="ath:AT3G18610"/>
<dbReference type="Araport" id="AT3G18610"/>
<dbReference type="TAIR" id="AT3G18610">
    <property type="gene designation" value="NUC-L2"/>
</dbReference>
<dbReference type="eggNOG" id="KOG4210">
    <property type="taxonomic scope" value="Eukaryota"/>
</dbReference>
<dbReference type="HOGENOM" id="CLU_030920_1_0_1"/>
<dbReference type="InParanoid" id="Q1PEP5"/>
<dbReference type="OMA" id="ADENALW"/>
<dbReference type="CD-CODE" id="4299E36E">
    <property type="entry name" value="Nucleolus"/>
</dbReference>
<dbReference type="PRO" id="PR:Q1PEP5"/>
<dbReference type="Proteomes" id="UP000006548">
    <property type="component" value="Chromosome 3"/>
</dbReference>
<dbReference type="ExpressionAtlas" id="Q1PEP5">
    <property type="expression patterns" value="baseline and differential"/>
</dbReference>
<dbReference type="GO" id="GO:0005730">
    <property type="term" value="C:nucleolus"/>
    <property type="evidence" value="ECO:0000314"/>
    <property type="project" value="UniProtKB"/>
</dbReference>
<dbReference type="GO" id="GO:0031491">
    <property type="term" value="F:nucleosome binding"/>
    <property type="evidence" value="ECO:0000314"/>
    <property type="project" value="TAIR"/>
</dbReference>
<dbReference type="GO" id="GO:0003723">
    <property type="term" value="F:RNA binding"/>
    <property type="evidence" value="ECO:0007669"/>
    <property type="project" value="UniProtKB-KW"/>
</dbReference>
<dbReference type="GO" id="GO:0006364">
    <property type="term" value="P:rRNA processing"/>
    <property type="evidence" value="ECO:0007669"/>
    <property type="project" value="UniProtKB-KW"/>
</dbReference>
<dbReference type="CDD" id="cd12450">
    <property type="entry name" value="RRM1_NUCLs"/>
    <property type="match status" value="1"/>
</dbReference>
<dbReference type="CDD" id="cd12451">
    <property type="entry name" value="RRM2_NUCLs"/>
    <property type="match status" value="1"/>
</dbReference>
<dbReference type="FunFam" id="3.30.70.330:FF:002047">
    <property type="match status" value="1"/>
</dbReference>
<dbReference type="FunFam" id="3.30.70.330:FF:001118">
    <property type="entry name" value="Nucleolin like 2"/>
    <property type="match status" value="1"/>
</dbReference>
<dbReference type="Gene3D" id="3.30.70.330">
    <property type="match status" value="2"/>
</dbReference>
<dbReference type="InterPro" id="IPR034349">
    <property type="entry name" value="NUCL_RRM1"/>
</dbReference>
<dbReference type="InterPro" id="IPR034350">
    <property type="entry name" value="NUCL_RRM2"/>
</dbReference>
<dbReference type="InterPro" id="IPR012677">
    <property type="entry name" value="Nucleotide-bd_a/b_plait_sf"/>
</dbReference>
<dbReference type="InterPro" id="IPR035979">
    <property type="entry name" value="RBD_domain_sf"/>
</dbReference>
<dbReference type="InterPro" id="IPR000504">
    <property type="entry name" value="RRM_dom"/>
</dbReference>
<dbReference type="PANTHER" id="PTHR23236">
    <property type="entry name" value="EUKARYOTIC TRANSLATION INITIATION FACTOR 4B/4H"/>
    <property type="match status" value="1"/>
</dbReference>
<dbReference type="PANTHER" id="PTHR23236:SF11">
    <property type="entry name" value="EUKARYOTIC TRANSLATION INITIATION FACTOR 4H"/>
    <property type="match status" value="1"/>
</dbReference>
<dbReference type="Pfam" id="PF00076">
    <property type="entry name" value="RRM_1"/>
    <property type="match status" value="2"/>
</dbReference>
<dbReference type="SMART" id="SM00360">
    <property type="entry name" value="RRM"/>
    <property type="match status" value="2"/>
</dbReference>
<dbReference type="SUPFAM" id="SSF54928">
    <property type="entry name" value="RNA-binding domain, RBD"/>
    <property type="match status" value="2"/>
</dbReference>
<dbReference type="PROSITE" id="PS50102">
    <property type="entry name" value="RRM"/>
    <property type="match status" value="2"/>
</dbReference>
<gene>
    <name evidence="7" type="primary">NUCL2</name>
    <name evidence="8" type="synonym">NUC2</name>
    <name type="synonym">PARLL1</name>
    <name evidence="11" type="ordered locus">At3g18610</name>
    <name evidence="12" type="ORF">K24M9.11</name>
</gene>
<organism>
    <name type="scientific">Arabidopsis thaliana</name>
    <name type="common">Mouse-ear cress</name>
    <dbReference type="NCBI Taxonomy" id="3702"/>
    <lineage>
        <taxon>Eukaryota</taxon>
        <taxon>Viridiplantae</taxon>
        <taxon>Streptophyta</taxon>
        <taxon>Embryophyta</taxon>
        <taxon>Tracheophyta</taxon>
        <taxon>Spermatophyta</taxon>
        <taxon>Magnoliopsida</taxon>
        <taxon>eudicotyledons</taxon>
        <taxon>Gunneridae</taxon>
        <taxon>Pentapetalae</taxon>
        <taxon>rosids</taxon>
        <taxon>malvids</taxon>
        <taxon>Brassicales</taxon>
        <taxon>Brassicaceae</taxon>
        <taxon>Camelineae</taxon>
        <taxon>Arabidopsis</taxon>
    </lineage>
</organism>
<keyword id="KW-0539">Nucleus</keyword>
<keyword id="KW-1185">Reference proteome</keyword>
<keyword id="KW-0677">Repeat</keyword>
<keyword id="KW-0694">RNA-binding</keyword>
<keyword id="KW-0698">rRNA processing</keyword>
<feature type="chain" id="PRO_0000417403" description="Nucleolin 2">
    <location>
        <begin position="1"/>
        <end position="636"/>
    </location>
</feature>
<feature type="domain" description="RRM 1" evidence="2">
    <location>
        <begin position="384"/>
        <end position="460"/>
    </location>
</feature>
<feature type="domain" description="RRM 2" evidence="2">
    <location>
        <begin position="479"/>
        <end position="558"/>
    </location>
</feature>
<feature type="region of interest" description="Disordered" evidence="3">
    <location>
        <begin position="1"/>
        <end position="386"/>
    </location>
</feature>
<feature type="region of interest" description="Disordered" evidence="3">
    <location>
        <begin position="458"/>
        <end position="481"/>
    </location>
</feature>
<feature type="region of interest" description="Disordered" evidence="3">
    <location>
        <begin position="544"/>
        <end position="636"/>
    </location>
</feature>
<feature type="compositionally biased region" description="Basic and acidic residues" evidence="3">
    <location>
        <begin position="43"/>
        <end position="63"/>
    </location>
</feature>
<feature type="compositionally biased region" description="Basic and acidic residues" evidence="3">
    <location>
        <begin position="76"/>
        <end position="89"/>
    </location>
</feature>
<feature type="compositionally biased region" description="Acidic residues" evidence="3">
    <location>
        <begin position="90"/>
        <end position="103"/>
    </location>
</feature>
<feature type="compositionally biased region" description="Basic and acidic residues" evidence="3">
    <location>
        <begin position="104"/>
        <end position="118"/>
    </location>
</feature>
<feature type="compositionally biased region" description="Acidic residues" evidence="3">
    <location>
        <begin position="122"/>
        <end position="133"/>
    </location>
</feature>
<feature type="compositionally biased region" description="Acidic residues" evidence="3">
    <location>
        <begin position="152"/>
        <end position="163"/>
    </location>
</feature>
<feature type="compositionally biased region" description="Acidic residues" evidence="3">
    <location>
        <begin position="182"/>
        <end position="193"/>
    </location>
</feature>
<feature type="compositionally biased region" description="Basic and acidic residues" evidence="3">
    <location>
        <begin position="224"/>
        <end position="238"/>
    </location>
</feature>
<feature type="compositionally biased region" description="Acidic residues" evidence="3">
    <location>
        <begin position="267"/>
        <end position="278"/>
    </location>
</feature>
<feature type="compositionally biased region" description="Acidic residues" evidence="3">
    <location>
        <begin position="299"/>
        <end position="311"/>
    </location>
</feature>
<feature type="compositionally biased region" description="Acidic residues" evidence="3">
    <location>
        <begin position="331"/>
        <end position="341"/>
    </location>
</feature>
<feature type="compositionally biased region" description="Basic and acidic residues" evidence="3">
    <location>
        <begin position="342"/>
        <end position="367"/>
    </location>
</feature>
<feature type="compositionally biased region" description="Polar residues" evidence="3">
    <location>
        <begin position="368"/>
        <end position="383"/>
    </location>
</feature>
<feature type="compositionally biased region" description="Polar residues" evidence="3">
    <location>
        <begin position="464"/>
        <end position="481"/>
    </location>
</feature>
<feature type="compositionally biased region" description="Basic and acidic residues" evidence="3">
    <location>
        <begin position="552"/>
        <end position="566"/>
    </location>
</feature>
<feature type="compositionally biased region" description="Basic and acidic residues" evidence="3">
    <location>
        <begin position="579"/>
        <end position="604"/>
    </location>
</feature>
<feature type="compositionally biased region" description="Polar residues" evidence="3">
    <location>
        <begin position="622"/>
        <end position="636"/>
    </location>
</feature>
<comment type="function">
    <text evidence="1">Involved in pre-rRNA processing and ribosome assembly.</text>
</comment>
<comment type="subunit">
    <text evidence="6">Interacts with THAL in the nucleus.</text>
</comment>
<comment type="subcellular location">
    <subcellularLocation>
        <location evidence="4 6">Nucleus</location>
        <location evidence="4 6">Nucleolus</location>
    </subcellularLocation>
</comment>
<comment type="tissue specificity">
    <text evidence="5">Expressed at low levels in flower buds.</text>
</comment>
<comment type="miscellaneous">
    <text evidence="10">Disruption of NUCL1 induces NUCL2 expression.</text>
</comment>
<comment type="sequence caution" evidence="9">
    <conflict type="erroneous gene model prediction">
        <sequence resource="EMBL-CDS" id="BAB02219"/>
    </conflict>
</comment>
<sequence length="636" mass="68987">MGKSSKKSVTEVETPASMTKPLKKGKRDAEEDLDMQVTKKQKKELIDVVQKEKAEKTVPKKVESSSSDASDSDEEEKTKETPSKLKDESSSEEEDDSSSDEEIAPAKKRPEPIKKAKVESSSSDDDSTSDEETAPVKKQPAVLEKAKVESSSSDDDSSSDEETVPVKKQPAVLEKAKIESSSSDDDSSSDEETVPMKKQTAVLEKAKAESSSSDDGSSSDEEPTPAKKEPIVVKKDSSDESSSDEETPVVKKKPTTVVKDAKAESSSSEEESSSDDEPTPAKKPTVVKNAKPAAKDSSSSEEDSDEEESDDEKPPTKKAKVSSKTSKQESSSDESSDESDKEESKDEKVTPKKKDSDVEMVDAEQKSNAKQPKTPTNQTQGGSKTLFAGNLSYQIARSDIENFFKEAGEVVDVRLSSFDDGSFKGYGHIEFASPEEAQKALEMNGKLLLGRDVRLDLANERGTPRNSNPGRKGEGSQSRTIYVRGFSSSLGEDEIKKELRSHFSKCGEVTRVHVPTDRETGASRGFAYIDLTSGFDEALQLSGSEIGGGNIHVEESRPRDSDEGRSSNRAPARGAPRGRHSDRAPRGGRFSDRAPRGRHSDRGAPRGRFSTRGRGPSKPSVMESSKGTKTVFNDEE</sequence>
<proteinExistence type="evidence at protein level"/>
<evidence type="ECO:0000250" key="1"/>
<evidence type="ECO:0000255" key="2">
    <source>
        <dbReference type="PROSITE-ProRule" id="PRU00176"/>
    </source>
</evidence>
<evidence type="ECO:0000256" key="3">
    <source>
        <dbReference type="SAM" id="MobiDB-lite"/>
    </source>
</evidence>
<evidence type="ECO:0000269" key="4">
    <source>
    </source>
</evidence>
<evidence type="ECO:0000269" key="5">
    <source>
    </source>
</evidence>
<evidence type="ECO:0000269" key="6">
    <source>
    </source>
</evidence>
<evidence type="ECO:0000303" key="7">
    <source>
    </source>
</evidence>
<evidence type="ECO:0000303" key="8">
    <source>
    </source>
</evidence>
<evidence type="ECO:0000305" key="9"/>
<evidence type="ECO:0000305" key="10">
    <source>
    </source>
</evidence>
<evidence type="ECO:0000312" key="11">
    <source>
        <dbReference type="Araport" id="AT3G18610"/>
    </source>
</evidence>
<evidence type="ECO:0000312" key="12">
    <source>
        <dbReference type="EMBL" id="BAB02219.1"/>
    </source>
</evidence>
<accession>Q1PEP5</accession>
<accession>Q9LIH8</accession>
<protein>
    <recommendedName>
        <fullName evidence="8">Nucleolin 2</fullName>
    </recommendedName>
    <alternativeName>
        <fullName evidence="7">Protein NUCLEOLIN LIKE 2</fullName>
        <shortName evidence="7">AtNUC-L2</shortName>
    </alternativeName>
    <alternativeName>
        <fullName>Protein PARALLEL LIKE 1</fullName>
        <shortName>AtPARLL1</shortName>
    </alternativeName>
</protein>